<reference key="1">
    <citation type="journal article" date="2005" name="Proc. Natl. Acad. Sci. U.S.A.">
        <title>The psychrophilic lifestyle as revealed by the genome sequence of Colwellia psychrerythraea 34H through genomic and proteomic analyses.</title>
        <authorList>
            <person name="Methe B.A."/>
            <person name="Nelson K.E."/>
            <person name="Deming J.W."/>
            <person name="Momen B."/>
            <person name="Melamud E."/>
            <person name="Zhang X."/>
            <person name="Moult J."/>
            <person name="Madupu R."/>
            <person name="Nelson W.C."/>
            <person name="Dodson R.J."/>
            <person name="Brinkac L.M."/>
            <person name="Daugherty S.C."/>
            <person name="Durkin A.S."/>
            <person name="DeBoy R.T."/>
            <person name="Kolonay J.F."/>
            <person name="Sullivan S.A."/>
            <person name="Zhou L."/>
            <person name="Davidsen T.M."/>
            <person name="Wu M."/>
            <person name="Huston A.L."/>
            <person name="Lewis M."/>
            <person name="Weaver B."/>
            <person name="Weidman J.F."/>
            <person name="Khouri H."/>
            <person name="Utterback T.R."/>
            <person name="Feldblyum T.V."/>
            <person name="Fraser C.M."/>
        </authorList>
    </citation>
    <scope>NUCLEOTIDE SEQUENCE [LARGE SCALE GENOMIC DNA]</scope>
    <source>
        <strain>34H / ATCC BAA-681</strain>
    </source>
</reference>
<name>RIMP_COLP3</name>
<feature type="chain" id="PRO_0000229232" description="Ribosome maturation factor RimP">
    <location>
        <begin position="1"/>
        <end position="151"/>
    </location>
</feature>
<organism>
    <name type="scientific">Colwellia psychrerythraea (strain 34H / ATCC BAA-681)</name>
    <name type="common">Vibrio psychroerythus</name>
    <dbReference type="NCBI Taxonomy" id="167879"/>
    <lineage>
        <taxon>Bacteria</taxon>
        <taxon>Pseudomonadati</taxon>
        <taxon>Pseudomonadota</taxon>
        <taxon>Gammaproteobacteria</taxon>
        <taxon>Alteromonadales</taxon>
        <taxon>Colwelliaceae</taxon>
        <taxon>Colwellia</taxon>
    </lineage>
</organism>
<gene>
    <name evidence="1" type="primary">rimP</name>
    <name type="ordered locus">CPS_2201</name>
</gene>
<proteinExistence type="inferred from homology"/>
<sequence length="151" mass="16684">MAKFEQKLTDLLRPAVEETGKTLHGIEYISAGNNSVLRLFIDHENGINVDDCAEVSRQVGAILDVEDPISSEYSLEVSSPGVDRPLFELAHFQEVIGETINVKISMPLNGRRKFKGPLVAIENDTLIVEVDSIDYELAISNIDKANLVAKF</sequence>
<keyword id="KW-0963">Cytoplasm</keyword>
<keyword id="KW-0690">Ribosome biogenesis</keyword>
<protein>
    <recommendedName>
        <fullName evidence="1">Ribosome maturation factor RimP</fullName>
    </recommendedName>
</protein>
<dbReference type="EMBL" id="CP000083">
    <property type="protein sequence ID" value="AAZ27528.1"/>
    <property type="molecule type" value="Genomic_DNA"/>
</dbReference>
<dbReference type="RefSeq" id="WP_011043020.1">
    <property type="nucleotide sequence ID" value="NC_003910.7"/>
</dbReference>
<dbReference type="SMR" id="Q482U1"/>
<dbReference type="STRING" id="167879.CPS_2201"/>
<dbReference type="KEGG" id="cps:CPS_2201"/>
<dbReference type="eggNOG" id="COG0779">
    <property type="taxonomic scope" value="Bacteria"/>
</dbReference>
<dbReference type="HOGENOM" id="CLU_070525_1_1_6"/>
<dbReference type="Proteomes" id="UP000000547">
    <property type="component" value="Chromosome"/>
</dbReference>
<dbReference type="GO" id="GO:0005829">
    <property type="term" value="C:cytosol"/>
    <property type="evidence" value="ECO:0007669"/>
    <property type="project" value="TreeGrafter"/>
</dbReference>
<dbReference type="GO" id="GO:0000028">
    <property type="term" value="P:ribosomal small subunit assembly"/>
    <property type="evidence" value="ECO:0007669"/>
    <property type="project" value="TreeGrafter"/>
</dbReference>
<dbReference type="GO" id="GO:0006412">
    <property type="term" value="P:translation"/>
    <property type="evidence" value="ECO:0007669"/>
    <property type="project" value="TreeGrafter"/>
</dbReference>
<dbReference type="CDD" id="cd01734">
    <property type="entry name" value="YlxS_C"/>
    <property type="match status" value="1"/>
</dbReference>
<dbReference type="FunFam" id="3.30.300.70:FF:000001">
    <property type="entry name" value="Ribosome maturation factor RimP"/>
    <property type="match status" value="1"/>
</dbReference>
<dbReference type="Gene3D" id="2.30.30.180">
    <property type="entry name" value="Ribosome maturation factor RimP, C-terminal domain"/>
    <property type="match status" value="1"/>
</dbReference>
<dbReference type="Gene3D" id="3.30.300.70">
    <property type="entry name" value="RimP-like superfamily, N-terminal"/>
    <property type="match status" value="1"/>
</dbReference>
<dbReference type="HAMAP" id="MF_01077">
    <property type="entry name" value="RimP"/>
    <property type="match status" value="1"/>
</dbReference>
<dbReference type="InterPro" id="IPR003728">
    <property type="entry name" value="Ribosome_maturation_RimP"/>
</dbReference>
<dbReference type="InterPro" id="IPR028998">
    <property type="entry name" value="RimP_C"/>
</dbReference>
<dbReference type="InterPro" id="IPR036847">
    <property type="entry name" value="RimP_C_sf"/>
</dbReference>
<dbReference type="InterPro" id="IPR028989">
    <property type="entry name" value="RimP_N"/>
</dbReference>
<dbReference type="InterPro" id="IPR035956">
    <property type="entry name" value="RimP_N_sf"/>
</dbReference>
<dbReference type="NCBIfam" id="NF000927">
    <property type="entry name" value="PRK00092.1-1"/>
    <property type="match status" value="1"/>
</dbReference>
<dbReference type="PANTHER" id="PTHR33867">
    <property type="entry name" value="RIBOSOME MATURATION FACTOR RIMP"/>
    <property type="match status" value="1"/>
</dbReference>
<dbReference type="PANTHER" id="PTHR33867:SF1">
    <property type="entry name" value="RIBOSOME MATURATION FACTOR RIMP"/>
    <property type="match status" value="1"/>
</dbReference>
<dbReference type="Pfam" id="PF17384">
    <property type="entry name" value="DUF150_C"/>
    <property type="match status" value="1"/>
</dbReference>
<dbReference type="Pfam" id="PF02576">
    <property type="entry name" value="RimP_N"/>
    <property type="match status" value="1"/>
</dbReference>
<dbReference type="SUPFAM" id="SSF74942">
    <property type="entry name" value="YhbC-like, C-terminal domain"/>
    <property type="match status" value="1"/>
</dbReference>
<dbReference type="SUPFAM" id="SSF75420">
    <property type="entry name" value="YhbC-like, N-terminal domain"/>
    <property type="match status" value="1"/>
</dbReference>
<evidence type="ECO:0000255" key="1">
    <source>
        <dbReference type="HAMAP-Rule" id="MF_01077"/>
    </source>
</evidence>
<accession>Q482U1</accession>
<comment type="function">
    <text evidence="1">Required for maturation of 30S ribosomal subunits.</text>
</comment>
<comment type="subcellular location">
    <subcellularLocation>
        <location evidence="1">Cytoplasm</location>
    </subcellularLocation>
</comment>
<comment type="similarity">
    <text evidence="1">Belongs to the RimP family.</text>
</comment>